<accession>Q9HU91</accession>
<protein>
    <recommendedName>
        <fullName evidence="1">Imidazolonepropionase</fullName>
        <ecNumber evidence="1">3.5.2.7</ecNumber>
    </recommendedName>
    <alternativeName>
        <fullName evidence="1">Imidazolone-5-propionate hydrolase</fullName>
    </alternativeName>
</protein>
<proteinExistence type="inferred from homology"/>
<gene>
    <name evidence="1" type="primary">hutI</name>
    <name type="ordered locus">PA5092</name>
</gene>
<keyword id="KW-0963">Cytoplasm</keyword>
<keyword id="KW-0369">Histidine metabolism</keyword>
<keyword id="KW-0378">Hydrolase</keyword>
<keyword id="KW-0408">Iron</keyword>
<keyword id="KW-0479">Metal-binding</keyword>
<keyword id="KW-1185">Reference proteome</keyword>
<keyword id="KW-0862">Zinc</keyword>
<evidence type="ECO:0000255" key="1">
    <source>
        <dbReference type="HAMAP-Rule" id="MF_00372"/>
    </source>
</evidence>
<dbReference type="EC" id="3.5.2.7" evidence="1"/>
<dbReference type="EMBL" id="AE004091">
    <property type="protein sequence ID" value="AAG08477.1"/>
    <property type="molecule type" value="Genomic_DNA"/>
</dbReference>
<dbReference type="PIR" id="A83009">
    <property type="entry name" value="A83009"/>
</dbReference>
<dbReference type="RefSeq" id="NP_253779.1">
    <property type="nucleotide sequence ID" value="NC_002516.2"/>
</dbReference>
<dbReference type="RefSeq" id="WP_003114456.1">
    <property type="nucleotide sequence ID" value="NZ_QZGE01000002.1"/>
</dbReference>
<dbReference type="SMR" id="Q9HU91"/>
<dbReference type="STRING" id="208964.PA5092"/>
<dbReference type="MEROPS" id="M38.980"/>
<dbReference type="PaxDb" id="208964-PA5092"/>
<dbReference type="GeneID" id="878339"/>
<dbReference type="KEGG" id="pae:PA5092"/>
<dbReference type="PATRIC" id="fig|208964.12.peg.5337"/>
<dbReference type="PseudoCAP" id="PA5092"/>
<dbReference type="HOGENOM" id="CLU_041647_0_0_6"/>
<dbReference type="InParanoid" id="Q9HU91"/>
<dbReference type="OrthoDB" id="9776455at2"/>
<dbReference type="PhylomeDB" id="Q9HU91"/>
<dbReference type="BioCyc" id="PAER208964:G1FZ6-5207-MONOMER"/>
<dbReference type="UniPathway" id="UPA00379">
    <property type="reaction ID" value="UER00551"/>
</dbReference>
<dbReference type="Proteomes" id="UP000002438">
    <property type="component" value="Chromosome"/>
</dbReference>
<dbReference type="GO" id="GO:0005737">
    <property type="term" value="C:cytoplasm"/>
    <property type="evidence" value="ECO:0007669"/>
    <property type="project" value="UniProtKB-SubCell"/>
</dbReference>
<dbReference type="GO" id="GO:0050480">
    <property type="term" value="F:imidazolonepropionase activity"/>
    <property type="evidence" value="ECO:0000315"/>
    <property type="project" value="PseudoCAP"/>
</dbReference>
<dbReference type="GO" id="GO:0005506">
    <property type="term" value="F:iron ion binding"/>
    <property type="evidence" value="ECO:0007669"/>
    <property type="project" value="UniProtKB-UniRule"/>
</dbReference>
<dbReference type="GO" id="GO:0008270">
    <property type="term" value="F:zinc ion binding"/>
    <property type="evidence" value="ECO:0007669"/>
    <property type="project" value="UniProtKB-UniRule"/>
</dbReference>
<dbReference type="GO" id="GO:0006548">
    <property type="term" value="P:L-histidine catabolic process"/>
    <property type="evidence" value="ECO:0000315"/>
    <property type="project" value="PseudoCAP"/>
</dbReference>
<dbReference type="GO" id="GO:0019556">
    <property type="term" value="P:L-histidine catabolic process to glutamate and formamide"/>
    <property type="evidence" value="ECO:0007669"/>
    <property type="project" value="UniProtKB-UniPathway"/>
</dbReference>
<dbReference type="GO" id="GO:0019557">
    <property type="term" value="P:L-histidine catabolic process to glutamate and formate"/>
    <property type="evidence" value="ECO:0007669"/>
    <property type="project" value="UniProtKB-UniPathway"/>
</dbReference>
<dbReference type="CDD" id="cd01296">
    <property type="entry name" value="Imidazolone-5PH"/>
    <property type="match status" value="1"/>
</dbReference>
<dbReference type="FunFam" id="3.20.20.140:FF:000007">
    <property type="entry name" value="Imidazolonepropionase"/>
    <property type="match status" value="1"/>
</dbReference>
<dbReference type="Gene3D" id="3.20.20.140">
    <property type="entry name" value="Metal-dependent hydrolases"/>
    <property type="match status" value="1"/>
</dbReference>
<dbReference type="Gene3D" id="2.30.40.10">
    <property type="entry name" value="Urease, subunit C, domain 1"/>
    <property type="match status" value="1"/>
</dbReference>
<dbReference type="HAMAP" id="MF_00372">
    <property type="entry name" value="HutI"/>
    <property type="match status" value="1"/>
</dbReference>
<dbReference type="InterPro" id="IPR006680">
    <property type="entry name" value="Amidohydro-rel"/>
</dbReference>
<dbReference type="InterPro" id="IPR005920">
    <property type="entry name" value="HutI"/>
</dbReference>
<dbReference type="InterPro" id="IPR011059">
    <property type="entry name" value="Metal-dep_hydrolase_composite"/>
</dbReference>
<dbReference type="InterPro" id="IPR032466">
    <property type="entry name" value="Metal_Hydrolase"/>
</dbReference>
<dbReference type="NCBIfam" id="TIGR01224">
    <property type="entry name" value="hutI"/>
    <property type="match status" value="1"/>
</dbReference>
<dbReference type="PANTHER" id="PTHR42752">
    <property type="entry name" value="IMIDAZOLONEPROPIONASE"/>
    <property type="match status" value="1"/>
</dbReference>
<dbReference type="PANTHER" id="PTHR42752:SF1">
    <property type="entry name" value="IMIDAZOLONEPROPIONASE-RELATED"/>
    <property type="match status" value="1"/>
</dbReference>
<dbReference type="Pfam" id="PF01979">
    <property type="entry name" value="Amidohydro_1"/>
    <property type="match status" value="1"/>
</dbReference>
<dbReference type="SUPFAM" id="SSF51338">
    <property type="entry name" value="Composite domain of metallo-dependent hydrolases"/>
    <property type="match status" value="1"/>
</dbReference>
<dbReference type="SUPFAM" id="SSF51556">
    <property type="entry name" value="Metallo-dependent hydrolases"/>
    <property type="match status" value="1"/>
</dbReference>
<comment type="function">
    <text evidence="1">Catalyzes the hydrolytic cleavage of the carbon-nitrogen bond in imidazolone-5-propanoate to yield N-formimidoyl-L-glutamate. It is the third step in the universal histidine degradation pathway.</text>
</comment>
<comment type="catalytic activity">
    <reaction evidence="1">
        <text>4-imidazolone-5-propanoate + H2O = N-formimidoyl-L-glutamate</text>
        <dbReference type="Rhea" id="RHEA:23660"/>
        <dbReference type="ChEBI" id="CHEBI:15377"/>
        <dbReference type="ChEBI" id="CHEBI:58928"/>
        <dbReference type="ChEBI" id="CHEBI:77893"/>
        <dbReference type="EC" id="3.5.2.7"/>
    </reaction>
</comment>
<comment type="cofactor">
    <cofactor evidence="1">
        <name>Zn(2+)</name>
        <dbReference type="ChEBI" id="CHEBI:29105"/>
    </cofactor>
    <cofactor evidence="1">
        <name>Fe(3+)</name>
        <dbReference type="ChEBI" id="CHEBI:29034"/>
    </cofactor>
    <text evidence="1">Binds 1 zinc or iron ion per subunit.</text>
</comment>
<comment type="pathway">
    <text evidence="1">Amino-acid degradation; L-histidine degradation into L-glutamate; N-formimidoyl-L-glutamate from L-histidine: step 3/3.</text>
</comment>
<comment type="subcellular location">
    <subcellularLocation>
        <location evidence="1">Cytoplasm</location>
    </subcellularLocation>
</comment>
<comment type="similarity">
    <text evidence="1">Belongs to the metallo-dependent hydrolases superfamily. HutI family.</text>
</comment>
<sequence length="402" mass="43426">MKRLWQHCHAATLKGGKYSIVEDAALVTDGPLIHWIGPRAELPPGDYAERIDLGGAWLTPGLIDCHTHAVFGGNRSGEFEQRLEGVSYAEIAAAGGGIASTVRATREASEEELLASARKRLEPLLRDGVTALEIKSGYGLDLASERKMLRVIRRLGERLPATVRSTCLAAHALPPEYAGRADDYIEHICSTMLPALAGEGLVDAVDAFCEHLAFSPAQVERVFIAARELGLPVKLHAEQLSSLHGSSLAARYRALSADHLEYMTEDDARAMGEAGTVAVLLPGAFYLLRETQLPPIDALRRHGVAMAIASDLNPGTSPALSLRLMLNMACTLFRLTPEETLAGVTLHAARALGLEASHGSLEVGKLADFVAWDIERPAELAYWLGGDLPKRVIRHAEEVYRG</sequence>
<organism>
    <name type="scientific">Pseudomonas aeruginosa (strain ATCC 15692 / DSM 22644 / CIP 104116 / JCM 14847 / LMG 12228 / 1C / PRS 101 / PAO1)</name>
    <dbReference type="NCBI Taxonomy" id="208964"/>
    <lineage>
        <taxon>Bacteria</taxon>
        <taxon>Pseudomonadati</taxon>
        <taxon>Pseudomonadota</taxon>
        <taxon>Gammaproteobacteria</taxon>
        <taxon>Pseudomonadales</taxon>
        <taxon>Pseudomonadaceae</taxon>
        <taxon>Pseudomonas</taxon>
    </lineage>
</organism>
<name>HUTI_PSEAE</name>
<feature type="chain" id="PRO_0000160949" description="Imidazolonepropionase">
    <location>
        <begin position="1"/>
        <end position="402"/>
    </location>
</feature>
<feature type="binding site" evidence="1">
    <location>
        <position position="66"/>
    </location>
    <ligand>
        <name>Fe(3+)</name>
        <dbReference type="ChEBI" id="CHEBI:29034"/>
    </ligand>
</feature>
<feature type="binding site" evidence="1">
    <location>
        <position position="66"/>
    </location>
    <ligand>
        <name>Zn(2+)</name>
        <dbReference type="ChEBI" id="CHEBI:29105"/>
    </ligand>
</feature>
<feature type="binding site" evidence="1">
    <location>
        <position position="68"/>
    </location>
    <ligand>
        <name>Fe(3+)</name>
        <dbReference type="ChEBI" id="CHEBI:29034"/>
    </ligand>
</feature>
<feature type="binding site" evidence="1">
    <location>
        <position position="68"/>
    </location>
    <ligand>
        <name>Zn(2+)</name>
        <dbReference type="ChEBI" id="CHEBI:29105"/>
    </ligand>
</feature>
<feature type="binding site" evidence="1">
    <location>
        <position position="75"/>
    </location>
    <ligand>
        <name>4-imidazolone-5-propanoate</name>
        <dbReference type="ChEBI" id="CHEBI:77893"/>
    </ligand>
</feature>
<feature type="binding site" evidence="1">
    <location>
        <position position="138"/>
    </location>
    <ligand>
        <name>4-imidazolone-5-propanoate</name>
        <dbReference type="ChEBI" id="CHEBI:77893"/>
    </ligand>
</feature>
<feature type="binding site" evidence="1">
    <location>
        <position position="138"/>
    </location>
    <ligand>
        <name>N-formimidoyl-L-glutamate</name>
        <dbReference type="ChEBI" id="CHEBI:58928"/>
    </ligand>
</feature>
<feature type="binding site" evidence="1">
    <location>
        <position position="171"/>
    </location>
    <ligand>
        <name>4-imidazolone-5-propanoate</name>
        <dbReference type="ChEBI" id="CHEBI:77893"/>
    </ligand>
</feature>
<feature type="binding site" evidence="1">
    <location>
        <position position="236"/>
    </location>
    <ligand>
        <name>Fe(3+)</name>
        <dbReference type="ChEBI" id="CHEBI:29034"/>
    </ligand>
</feature>
<feature type="binding site" evidence="1">
    <location>
        <position position="236"/>
    </location>
    <ligand>
        <name>Zn(2+)</name>
        <dbReference type="ChEBI" id="CHEBI:29105"/>
    </ligand>
</feature>
<feature type="binding site" evidence="1">
    <location>
        <position position="239"/>
    </location>
    <ligand>
        <name>4-imidazolone-5-propanoate</name>
        <dbReference type="ChEBI" id="CHEBI:77893"/>
    </ligand>
</feature>
<feature type="binding site" evidence="1">
    <location>
        <position position="311"/>
    </location>
    <ligand>
        <name>Fe(3+)</name>
        <dbReference type="ChEBI" id="CHEBI:29034"/>
    </ligand>
</feature>
<feature type="binding site" evidence="1">
    <location>
        <position position="311"/>
    </location>
    <ligand>
        <name>Zn(2+)</name>
        <dbReference type="ChEBI" id="CHEBI:29105"/>
    </ligand>
</feature>
<feature type="binding site" evidence="1">
    <location>
        <position position="313"/>
    </location>
    <ligand>
        <name>N-formimidoyl-L-glutamate</name>
        <dbReference type="ChEBI" id="CHEBI:58928"/>
    </ligand>
</feature>
<feature type="binding site" evidence="1">
    <location>
        <position position="315"/>
    </location>
    <ligand>
        <name>N-formimidoyl-L-glutamate</name>
        <dbReference type="ChEBI" id="CHEBI:58928"/>
    </ligand>
</feature>
<feature type="binding site" evidence="1">
    <location>
        <position position="316"/>
    </location>
    <ligand>
        <name>4-imidazolone-5-propanoate</name>
        <dbReference type="ChEBI" id="CHEBI:77893"/>
    </ligand>
</feature>
<reference key="1">
    <citation type="journal article" date="2000" name="Nature">
        <title>Complete genome sequence of Pseudomonas aeruginosa PAO1, an opportunistic pathogen.</title>
        <authorList>
            <person name="Stover C.K."/>
            <person name="Pham X.-Q.T."/>
            <person name="Erwin A.L."/>
            <person name="Mizoguchi S.D."/>
            <person name="Warrener P."/>
            <person name="Hickey M.J."/>
            <person name="Brinkman F.S.L."/>
            <person name="Hufnagle W.O."/>
            <person name="Kowalik D.J."/>
            <person name="Lagrou M."/>
            <person name="Garber R.L."/>
            <person name="Goltry L."/>
            <person name="Tolentino E."/>
            <person name="Westbrock-Wadman S."/>
            <person name="Yuan Y."/>
            <person name="Brody L.L."/>
            <person name="Coulter S.N."/>
            <person name="Folger K.R."/>
            <person name="Kas A."/>
            <person name="Larbig K."/>
            <person name="Lim R.M."/>
            <person name="Smith K.A."/>
            <person name="Spencer D.H."/>
            <person name="Wong G.K.-S."/>
            <person name="Wu Z."/>
            <person name="Paulsen I.T."/>
            <person name="Reizer J."/>
            <person name="Saier M.H. Jr."/>
            <person name="Hancock R.E.W."/>
            <person name="Lory S."/>
            <person name="Olson M.V."/>
        </authorList>
    </citation>
    <scope>NUCLEOTIDE SEQUENCE [LARGE SCALE GENOMIC DNA]</scope>
    <source>
        <strain>ATCC 15692 / DSM 22644 / CIP 104116 / JCM 14847 / LMG 12228 / 1C / PRS 101 / PAO1</strain>
    </source>
</reference>